<feature type="chain" id="PRO_0000315175" description="UDP-N-acetylglucosamine--N-acetylmuramyl-(pentapeptide) pyrophosphoryl-undecaprenol N-acetylglucosamine transferase">
    <location>
        <begin position="1"/>
        <end position="356"/>
    </location>
</feature>
<feature type="binding site" evidence="1">
    <location>
        <position position="166"/>
    </location>
    <ligand>
        <name>UDP-N-acetyl-alpha-D-glucosamine</name>
        <dbReference type="ChEBI" id="CHEBI:57705"/>
    </ligand>
</feature>
<feature type="binding site" evidence="1">
    <location>
        <position position="196"/>
    </location>
    <ligand>
        <name>UDP-N-acetyl-alpha-D-glucosamine</name>
        <dbReference type="ChEBI" id="CHEBI:57705"/>
    </ligand>
</feature>
<feature type="binding site" evidence="1">
    <location>
        <position position="290"/>
    </location>
    <ligand>
        <name>UDP-N-acetyl-alpha-D-glucosamine</name>
        <dbReference type="ChEBI" id="CHEBI:57705"/>
    </ligand>
</feature>
<gene>
    <name evidence="1" type="primary">murG</name>
    <name type="ordered locus">SAUSA300_1311</name>
</gene>
<organism>
    <name type="scientific">Staphylococcus aureus (strain USA300)</name>
    <dbReference type="NCBI Taxonomy" id="367830"/>
    <lineage>
        <taxon>Bacteria</taxon>
        <taxon>Bacillati</taxon>
        <taxon>Bacillota</taxon>
        <taxon>Bacilli</taxon>
        <taxon>Bacillales</taxon>
        <taxon>Staphylococcaceae</taxon>
        <taxon>Staphylococcus</taxon>
    </lineage>
</organism>
<reference key="1">
    <citation type="journal article" date="2006" name="Lancet">
        <title>Complete genome sequence of USA300, an epidemic clone of community-acquired meticillin-resistant Staphylococcus aureus.</title>
        <authorList>
            <person name="Diep B.A."/>
            <person name="Gill S.R."/>
            <person name="Chang R.F."/>
            <person name="Phan T.H."/>
            <person name="Chen J.H."/>
            <person name="Davidson M.G."/>
            <person name="Lin F."/>
            <person name="Lin J."/>
            <person name="Carleton H.A."/>
            <person name="Mongodin E.F."/>
            <person name="Sensabaugh G.F."/>
            <person name="Perdreau-Remington F."/>
        </authorList>
    </citation>
    <scope>NUCLEOTIDE SEQUENCE [LARGE SCALE GENOMIC DNA]</scope>
    <source>
        <strain>USA300</strain>
    </source>
</reference>
<sequence length="356" mass="39697">MTKIAFTGGGTVGHVSVNLSLIPTALSQGYEALYIGSKNGIEREMIESQLPEIKYYPISSGKLRRYISLENAKDVFKVLKGILDARKVLKKEKPDLLFSKGGFVSVPVVIAAKSLNIPTLIHESDLTPGLANKIALKFAKKIYTTFEETLNYLPKEKADFIGATIREDLKNGNAHNGYQLTGFNENKKVLLVMGGSLGSKKLNSIIRENLDALLQQYQVIHLTGKGLKDAQVKKSGYIQYEFVKEDLTDLLAITDTVISRAGSNAIYEFLTLRIPMLLVPLGLDQSRGDQIDNANHFADKGYAKAIDEEQLTAQILLQELNEMEQERTRIINNMKSYEQSYTKEALFDKMIKDALN</sequence>
<name>MURG_STAA3</name>
<keyword id="KW-0131">Cell cycle</keyword>
<keyword id="KW-0132">Cell division</keyword>
<keyword id="KW-1003">Cell membrane</keyword>
<keyword id="KW-0133">Cell shape</keyword>
<keyword id="KW-0961">Cell wall biogenesis/degradation</keyword>
<keyword id="KW-0328">Glycosyltransferase</keyword>
<keyword id="KW-0472">Membrane</keyword>
<keyword id="KW-0573">Peptidoglycan synthesis</keyword>
<keyword id="KW-0808">Transferase</keyword>
<proteinExistence type="inferred from homology"/>
<comment type="function">
    <text evidence="1">Cell wall formation. Catalyzes the transfer of a GlcNAc subunit on undecaprenyl-pyrophosphoryl-MurNAc-pentapeptide (lipid intermediate I) to form undecaprenyl-pyrophosphoryl-MurNAc-(pentapeptide)GlcNAc (lipid intermediate II).</text>
</comment>
<comment type="catalytic activity">
    <reaction evidence="1">
        <text>Mur2Ac(oyl-L-Ala-gamma-D-Glu-L-Lys-D-Ala-D-Ala)-di-trans,octa-cis-undecaprenyl diphosphate + UDP-N-acetyl-alpha-D-glucosamine = beta-D-GlcNAc-(1-&gt;4)-Mur2Ac(oyl-L-Ala-gamma-D-Glu-L-Lys-D-Ala-D-Ala)-di-trans,octa-cis-undecaprenyl diphosphate + UDP + H(+)</text>
        <dbReference type="Rhea" id="RHEA:23192"/>
        <dbReference type="ChEBI" id="CHEBI:15378"/>
        <dbReference type="ChEBI" id="CHEBI:57705"/>
        <dbReference type="ChEBI" id="CHEBI:58223"/>
        <dbReference type="ChEBI" id="CHEBI:60032"/>
        <dbReference type="ChEBI" id="CHEBI:60033"/>
        <dbReference type="EC" id="2.4.1.227"/>
    </reaction>
</comment>
<comment type="pathway">
    <text evidence="1">Cell wall biogenesis; peptidoglycan biosynthesis.</text>
</comment>
<comment type="subcellular location">
    <subcellularLocation>
        <location evidence="1">Cell membrane</location>
        <topology evidence="1">Peripheral membrane protein</topology>
        <orientation evidence="1">Cytoplasmic side</orientation>
    </subcellularLocation>
</comment>
<comment type="similarity">
    <text evidence="1">Belongs to the glycosyltransferase 28 family. MurG subfamily.</text>
</comment>
<accession>Q2FH20</accession>
<evidence type="ECO:0000255" key="1">
    <source>
        <dbReference type="HAMAP-Rule" id="MF_00033"/>
    </source>
</evidence>
<protein>
    <recommendedName>
        <fullName evidence="1">UDP-N-acetylglucosamine--N-acetylmuramyl-(pentapeptide) pyrophosphoryl-undecaprenol N-acetylglucosamine transferase</fullName>
        <ecNumber evidence="1">2.4.1.227</ecNumber>
    </recommendedName>
    <alternativeName>
        <fullName evidence="1">Undecaprenyl-PP-MurNAc-pentapeptide-UDPGlcNAc GlcNAc transferase</fullName>
    </alternativeName>
</protein>
<dbReference type="EC" id="2.4.1.227" evidence="1"/>
<dbReference type="EMBL" id="CP000255">
    <property type="protein sequence ID" value="ABD22574.1"/>
    <property type="molecule type" value="Genomic_DNA"/>
</dbReference>
<dbReference type="RefSeq" id="WP_000160913.1">
    <property type="nucleotide sequence ID" value="NZ_CP027476.1"/>
</dbReference>
<dbReference type="SMR" id="Q2FH20"/>
<dbReference type="KEGG" id="saa:SAUSA300_1311"/>
<dbReference type="HOGENOM" id="CLU_037404_0_0_9"/>
<dbReference type="OMA" id="AADMMLC"/>
<dbReference type="UniPathway" id="UPA00219"/>
<dbReference type="Proteomes" id="UP000001939">
    <property type="component" value="Chromosome"/>
</dbReference>
<dbReference type="GO" id="GO:0005886">
    <property type="term" value="C:plasma membrane"/>
    <property type="evidence" value="ECO:0007669"/>
    <property type="project" value="UniProtKB-SubCell"/>
</dbReference>
<dbReference type="GO" id="GO:0050511">
    <property type="term" value="F:undecaprenyldiphospho-muramoylpentapeptide beta-N-acetylglucosaminyltransferase activity"/>
    <property type="evidence" value="ECO:0007669"/>
    <property type="project" value="UniProtKB-UniRule"/>
</dbReference>
<dbReference type="GO" id="GO:0005975">
    <property type="term" value="P:carbohydrate metabolic process"/>
    <property type="evidence" value="ECO:0007669"/>
    <property type="project" value="InterPro"/>
</dbReference>
<dbReference type="GO" id="GO:0051301">
    <property type="term" value="P:cell division"/>
    <property type="evidence" value="ECO:0007669"/>
    <property type="project" value="UniProtKB-KW"/>
</dbReference>
<dbReference type="GO" id="GO:0071555">
    <property type="term" value="P:cell wall organization"/>
    <property type="evidence" value="ECO:0007669"/>
    <property type="project" value="UniProtKB-KW"/>
</dbReference>
<dbReference type="GO" id="GO:0030259">
    <property type="term" value="P:lipid glycosylation"/>
    <property type="evidence" value="ECO:0007669"/>
    <property type="project" value="UniProtKB-UniRule"/>
</dbReference>
<dbReference type="GO" id="GO:0009252">
    <property type="term" value="P:peptidoglycan biosynthetic process"/>
    <property type="evidence" value="ECO:0007669"/>
    <property type="project" value="UniProtKB-UniRule"/>
</dbReference>
<dbReference type="GO" id="GO:0008360">
    <property type="term" value="P:regulation of cell shape"/>
    <property type="evidence" value="ECO:0007669"/>
    <property type="project" value="UniProtKB-KW"/>
</dbReference>
<dbReference type="CDD" id="cd03785">
    <property type="entry name" value="GT28_MurG"/>
    <property type="match status" value="1"/>
</dbReference>
<dbReference type="Gene3D" id="3.40.50.2000">
    <property type="entry name" value="Glycogen Phosphorylase B"/>
    <property type="match status" value="2"/>
</dbReference>
<dbReference type="HAMAP" id="MF_00033">
    <property type="entry name" value="MurG"/>
    <property type="match status" value="1"/>
</dbReference>
<dbReference type="InterPro" id="IPR006009">
    <property type="entry name" value="GlcNAc_MurG"/>
</dbReference>
<dbReference type="InterPro" id="IPR007235">
    <property type="entry name" value="Glyco_trans_28_C"/>
</dbReference>
<dbReference type="InterPro" id="IPR004276">
    <property type="entry name" value="GlycoTrans_28_N"/>
</dbReference>
<dbReference type="NCBIfam" id="NF009102">
    <property type="entry name" value="PRK12446.1"/>
    <property type="match status" value="1"/>
</dbReference>
<dbReference type="PANTHER" id="PTHR21015:SF27">
    <property type="entry name" value="UDP-N-ACETYLGLUCOSAMINE--N-ACETYLMURAMYL-(PENTAPEPTIDE) PYROPHOSPHORYL-UNDECAPRENOL N-ACETYLGLUCOSAMINE TRANSFERASE"/>
    <property type="match status" value="1"/>
</dbReference>
<dbReference type="PANTHER" id="PTHR21015">
    <property type="entry name" value="UDP-N-ACETYLGLUCOSAMINE--N-ACETYLMURAMYL-(PENTAPEPTIDE) PYROPHOSPHORYL-UNDECAPRENOL N-ACETYLGLUCOSAMINE TRANSFERASE 1"/>
    <property type="match status" value="1"/>
</dbReference>
<dbReference type="Pfam" id="PF04101">
    <property type="entry name" value="Glyco_tran_28_C"/>
    <property type="match status" value="1"/>
</dbReference>
<dbReference type="Pfam" id="PF03033">
    <property type="entry name" value="Glyco_transf_28"/>
    <property type="match status" value="1"/>
</dbReference>
<dbReference type="SUPFAM" id="SSF53756">
    <property type="entry name" value="UDP-Glycosyltransferase/glycogen phosphorylase"/>
    <property type="match status" value="1"/>
</dbReference>